<name>TUAF_BACSU</name>
<proteinExistence type="evidence at transcript level"/>
<organism>
    <name type="scientific">Bacillus subtilis (strain 168)</name>
    <dbReference type="NCBI Taxonomy" id="224308"/>
    <lineage>
        <taxon>Bacteria</taxon>
        <taxon>Bacillati</taxon>
        <taxon>Bacillota</taxon>
        <taxon>Bacilli</taxon>
        <taxon>Bacillales</taxon>
        <taxon>Bacillaceae</taxon>
        <taxon>Bacillus</taxon>
    </lineage>
</organism>
<reference key="1">
    <citation type="journal article" date="1999" name="Mol. Microbiol.">
        <title>Teichuronic acid operon of Bacillus subtilis 168.</title>
        <authorList>
            <person name="Soldo B."/>
            <person name="Lazarevic V."/>
            <person name="Pagni M."/>
            <person name="Karamata D."/>
        </authorList>
    </citation>
    <scope>NUCLEOTIDE SEQUENCE [GENOMIC DNA]</scope>
    <source>
        <strain>168</strain>
    </source>
</reference>
<reference key="2">
    <citation type="journal article" date="1997" name="Nature">
        <title>The complete genome sequence of the Gram-positive bacterium Bacillus subtilis.</title>
        <authorList>
            <person name="Kunst F."/>
            <person name="Ogasawara N."/>
            <person name="Moszer I."/>
            <person name="Albertini A.M."/>
            <person name="Alloni G."/>
            <person name="Azevedo V."/>
            <person name="Bertero M.G."/>
            <person name="Bessieres P."/>
            <person name="Bolotin A."/>
            <person name="Borchert S."/>
            <person name="Borriss R."/>
            <person name="Boursier L."/>
            <person name="Brans A."/>
            <person name="Braun M."/>
            <person name="Brignell S.C."/>
            <person name="Bron S."/>
            <person name="Brouillet S."/>
            <person name="Bruschi C.V."/>
            <person name="Caldwell B."/>
            <person name="Capuano V."/>
            <person name="Carter N.M."/>
            <person name="Choi S.-K."/>
            <person name="Codani J.-J."/>
            <person name="Connerton I.F."/>
            <person name="Cummings N.J."/>
            <person name="Daniel R.A."/>
            <person name="Denizot F."/>
            <person name="Devine K.M."/>
            <person name="Duesterhoeft A."/>
            <person name="Ehrlich S.D."/>
            <person name="Emmerson P.T."/>
            <person name="Entian K.-D."/>
            <person name="Errington J."/>
            <person name="Fabret C."/>
            <person name="Ferrari E."/>
            <person name="Foulger D."/>
            <person name="Fritz C."/>
            <person name="Fujita M."/>
            <person name="Fujita Y."/>
            <person name="Fuma S."/>
            <person name="Galizzi A."/>
            <person name="Galleron N."/>
            <person name="Ghim S.-Y."/>
            <person name="Glaser P."/>
            <person name="Goffeau A."/>
            <person name="Golightly E.J."/>
            <person name="Grandi G."/>
            <person name="Guiseppi G."/>
            <person name="Guy B.J."/>
            <person name="Haga K."/>
            <person name="Haiech J."/>
            <person name="Harwood C.R."/>
            <person name="Henaut A."/>
            <person name="Hilbert H."/>
            <person name="Holsappel S."/>
            <person name="Hosono S."/>
            <person name="Hullo M.-F."/>
            <person name="Itaya M."/>
            <person name="Jones L.-M."/>
            <person name="Joris B."/>
            <person name="Karamata D."/>
            <person name="Kasahara Y."/>
            <person name="Klaerr-Blanchard M."/>
            <person name="Klein C."/>
            <person name="Kobayashi Y."/>
            <person name="Koetter P."/>
            <person name="Koningstein G."/>
            <person name="Krogh S."/>
            <person name="Kumano M."/>
            <person name="Kurita K."/>
            <person name="Lapidus A."/>
            <person name="Lardinois S."/>
            <person name="Lauber J."/>
            <person name="Lazarevic V."/>
            <person name="Lee S.-M."/>
            <person name="Levine A."/>
            <person name="Liu H."/>
            <person name="Masuda S."/>
            <person name="Mauel C."/>
            <person name="Medigue C."/>
            <person name="Medina N."/>
            <person name="Mellado R.P."/>
            <person name="Mizuno M."/>
            <person name="Moestl D."/>
            <person name="Nakai S."/>
            <person name="Noback M."/>
            <person name="Noone D."/>
            <person name="O'Reilly M."/>
            <person name="Ogawa K."/>
            <person name="Ogiwara A."/>
            <person name="Oudega B."/>
            <person name="Park S.-H."/>
            <person name="Parro V."/>
            <person name="Pohl T.M."/>
            <person name="Portetelle D."/>
            <person name="Porwollik S."/>
            <person name="Prescott A.M."/>
            <person name="Presecan E."/>
            <person name="Pujic P."/>
            <person name="Purnelle B."/>
            <person name="Rapoport G."/>
            <person name="Rey M."/>
            <person name="Reynolds S."/>
            <person name="Rieger M."/>
            <person name="Rivolta C."/>
            <person name="Rocha E."/>
            <person name="Roche B."/>
            <person name="Rose M."/>
            <person name="Sadaie Y."/>
            <person name="Sato T."/>
            <person name="Scanlan E."/>
            <person name="Schleich S."/>
            <person name="Schroeter R."/>
            <person name="Scoffone F."/>
            <person name="Sekiguchi J."/>
            <person name="Sekowska A."/>
            <person name="Seror S.J."/>
            <person name="Serror P."/>
            <person name="Shin B.-S."/>
            <person name="Soldo B."/>
            <person name="Sorokin A."/>
            <person name="Tacconi E."/>
            <person name="Takagi T."/>
            <person name="Takahashi H."/>
            <person name="Takemaru K."/>
            <person name="Takeuchi M."/>
            <person name="Tamakoshi A."/>
            <person name="Tanaka T."/>
            <person name="Terpstra P."/>
            <person name="Tognoni A."/>
            <person name="Tosato V."/>
            <person name="Uchiyama S."/>
            <person name="Vandenbol M."/>
            <person name="Vannier F."/>
            <person name="Vassarotti A."/>
            <person name="Viari A."/>
            <person name="Wambutt R."/>
            <person name="Wedler E."/>
            <person name="Wedler H."/>
            <person name="Weitzenegger T."/>
            <person name="Winters P."/>
            <person name="Wipat A."/>
            <person name="Yamamoto H."/>
            <person name="Yamane K."/>
            <person name="Yasumoto K."/>
            <person name="Yata K."/>
            <person name="Yoshida K."/>
            <person name="Yoshikawa H.-F."/>
            <person name="Zumstein E."/>
            <person name="Yoshikawa H."/>
            <person name="Danchin A."/>
        </authorList>
    </citation>
    <scope>NUCLEOTIDE SEQUENCE [LARGE SCALE GENOMIC DNA]</scope>
    <source>
        <strain>168</strain>
    </source>
</reference>
<comment type="pathway">
    <text>Cell wall biogenesis; teichuronic acid biosynthesis.</text>
</comment>
<comment type="subcellular location">
    <subcellularLocation>
        <location evidence="2">Cell membrane</location>
        <topology evidence="2">Multi-pass membrane protein</topology>
    </subcellularLocation>
</comment>
<comment type="induction">
    <text>By phosphate starvation, via the PhoP/PhoR two-component regulatory system.</text>
</comment>
<comment type="miscellaneous">
    <text>The nature of the anionic polymer present in the cell wall of B.subtilis depends on phosphate availability. Under phosphate-replete growth conditions teichoic acids are present, whereas under phosphate-depleted conditions, at least part of the wall teichoic acid is replaced with teichuronic acid, a non-phosphate containing anionic polymer. The synthesis of teichuronic acid is accompanied by degradation of teichoic acid and reutilization of liberated phosphate for other cellular processes such as nucleic acid synthesis.</text>
</comment>
<gene>
    <name type="primary">tuaF</name>
    <name type="synonym">yvhF</name>
    <name type="ordered locus">BSU35560</name>
</gene>
<sequence>MNDILIRIARRIKKNIIWIIAVPIILGAAGYILPSQIADQKSYTAEDTLAVGSYDHPVYNSTEEIPLLLKSDSFLKEALPDEKDEDVAEIKEKLTINTESKSLLTLSYSDEDKDRTESVLNAISSTFLKNDQKLYAEREAVIRSSIDALEGESVSEDSKVDKERFLYELKNTQLNLKAASVTDSETVSETAGGGMSPKKKAVLGVMIGLTIAFMFVVIPEFFRESF</sequence>
<feature type="chain" id="PRO_0000065692" description="Teichuronic acid biosynthesis protein TuaF">
    <location>
        <begin position="1"/>
        <end position="226"/>
    </location>
</feature>
<feature type="transmembrane region" description="Helical" evidence="1">
    <location>
        <begin position="15"/>
        <end position="35"/>
    </location>
</feature>
<feature type="transmembrane region" description="Helical" evidence="1">
    <location>
        <begin position="202"/>
        <end position="222"/>
    </location>
</feature>
<accession>O32269</accession>
<evidence type="ECO:0000255" key="1"/>
<evidence type="ECO:0000305" key="2"/>
<dbReference type="EMBL" id="AF015609">
    <property type="protein sequence ID" value="AAB94867.1"/>
    <property type="molecule type" value="Genomic_DNA"/>
</dbReference>
<dbReference type="EMBL" id="AL009126">
    <property type="protein sequence ID" value="CAB15573.1"/>
    <property type="molecule type" value="Genomic_DNA"/>
</dbReference>
<dbReference type="PIR" id="H69727">
    <property type="entry name" value="H69727"/>
</dbReference>
<dbReference type="RefSeq" id="NP_391436.1">
    <property type="nucleotide sequence ID" value="NC_000964.3"/>
</dbReference>
<dbReference type="RefSeq" id="WP_003243110.1">
    <property type="nucleotide sequence ID" value="NZ_OZ025638.1"/>
</dbReference>
<dbReference type="SMR" id="O32269"/>
<dbReference type="FunCoup" id="O32269">
    <property type="interactions" value="20"/>
</dbReference>
<dbReference type="STRING" id="224308.BSU35560"/>
<dbReference type="PaxDb" id="224308-BSU35560"/>
<dbReference type="EnsemblBacteria" id="CAB15573">
    <property type="protein sequence ID" value="CAB15573"/>
    <property type="gene ID" value="BSU_35560"/>
</dbReference>
<dbReference type="GeneID" id="936768"/>
<dbReference type="KEGG" id="bsu:BSU35560"/>
<dbReference type="PATRIC" id="fig|224308.179.peg.3847"/>
<dbReference type="eggNOG" id="COG3206">
    <property type="taxonomic scope" value="Bacteria"/>
</dbReference>
<dbReference type="InParanoid" id="O32269"/>
<dbReference type="OrthoDB" id="2939314at2"/>
<dbReference type="BioCyc" id="BSUB:BSU35560-MONOMER"/>
<dbReference type="UniPathway" id="UPA00844"/>
<dbReference type="Proteomes" id="UP000001570">
    <property type="component" value="Chromosome"/>
</dbReference>
<dbReference type="GO" id="GO:0005886">
    <property type="term" value="C:plasma membrane"/>
    <property type="evidence" value="ECO:0007669"/>
    <property type="project" value="UniProtKB-SubCell"/>
</dbReference>
<dbReference type="GO" id="GO:0071555">
    <property type="term" value="P:cell wall organization"/>
    <property type="evidence" value="ECO:0007669"/>
    <property type="project" value="UniProtKB-KW"/>
</dbReference>
<dbReference type="GO" id="GO:0050845">
    <property type="term" value="P:teichuronic acid biosynthetic process"/>
    <property type="evidence" value="ECO:0007669"/>
    <property type="project" value="UniProtKB-UniPathway"/>
</dbReference>
<dbReference type="InterPro" id="IPR003856">
    <property type="entry name" value="LPS_length_determ_N_term"/>
</dbReference>
<dbReference type="NCBIfam" id="NF047685">
    <property type="entry name" value="TeichurnBiosyTuaF"/>
    <property type="match status" value="1"/>
</dbReference>
<dbReference type="Pfam" id="PF02706">
    <property type="entry name" value="Wzz"/>
    <property type="match status" value="1"/>
</dbReference>
<protein>
    <recommendedName>
        <fullName>Teichuronic acid biosynthesis protein TuaF</fullName>
    </recommendedName>
</protein>
<keyword id="KW-1003">Cell membrane</keyword>
<keyword id="KW-0961">Cell wall biogenesis/degradation</keyword>
<keyword id="KW-0472">Membrane</keyword>
<keyword id="KW-1185">Reference proteome</keyword>
<keyword id="KW-0346">Stress response</keyword>
<keyword id="KW-0812">Transmembrane</keyword>
<keyword id="KW-1133">Transmembrane helix</keyword>